<accession>Q0T0D2</accession>
<feature type="chain" id="PRO_1000065551" description="DnaA initiator-associating protein DiaA">
    <location>
        <begin position="1"/>
        <end position="196"/>
    </location>
</feature>
<feature type="domain" description="SIS" evidence="1">
    <location>
        <begin position="34"/>
        <end position="196"/>
    </location>
</feature>
<name>DIAA_SHIF8</name>
<reference key="1">
    <citation type="journal article" date="2006" name="BMC Genomics">
        <title>Complete genome sequence of Shigella flexneri 5b and comparison with Shigella flexneri 2a.</title>
        <authorList>
            <person name="Nie H."/>
            <person name="Yang F."/>
            <person name="Zhang X."/>
            <person name="Yang J."/>
            <person name="Chen L."/>
            <person name="Wang J."/>
            <person name="Xiong Z."/>
            <person name="Peng J."/>
            <person name="Sun L."/>
            <person name="Dong J."/>
            <person name="Xue Y."/>
            <person name="Xu X."/>
            <person name="Chen S."/>
            <person name="Yao Z."/>
            <person name="Shen Y."/>
            <person name="Jin Q."/>
        </authorList>
    </citation>
    <scope>NUCLEOTIDE SEQUENCE [LARGE SCALE GENOMIC DNA]</scope>
    <source>
        <strain>8401</strain>
    </source>
</reference>
<protein>
    <recommendedName>
        <fullName evidence="1">DnaA initiator-associating protein DiaA</fullName>
    </recommendedName>
</protein>
<proteinExistence type="inferred from homology"/>
<evidence type="ECO:0000255" key="1">
    <source>
        <dbReference type="HAMAP-Rule" id="MF_01157"/>
    </source>
</evidence>
<sequence length="196" mass="21076">MQERIKACFTESIQTQIAAAEALPDAISRAAMTLVQSLLNGNKILCCGNGTSAANAQHFAASMINRFETERPSLPAIALNTDNVVLTAIANDRLHDEVYAKQVRALGHAGDVLLAISARGNSRDIVKAVEAAVTRDMTIVALTGYDGGELAGLLGPQDVEIRIPSHRSARIQEMHMLTVNCLCDLIDNTLFPHQDD</sequence>
<comment type="function">
    <text evidence="1">Required for the timely initiation of chromosomal replication via direct interactions with the DnaA initiator protein.</text>
</comment>
<comment type="subunit">
    <text evidence="1">Homotetramer; dimer of dimers.</text>
</comment>
<comment type="similarity">
    <text evidence="1">Belongs to the SIS family. DiaA subfamily.</text>
</comment>
<dbReference type="EMBL" id="CP000266">
    <property type="protein sequence ID" value="ABF05233.1"/>
    <property type="molecule type" value="Genomic_DNA"/>
</dbReference>
<dbReference type="RefSeq" id="WP_001158030.1">
    <property type="nucleotide sequence ID" value="NC_008258.1"/>
</dbReference>
<dbReference type="SMR" id="Q0T0D2"/>
<dbReference type="KEGG" id="sfv:SFV_3179"/>
<dbReference type="HOGENOM" id="CLU_080999_3_1_6"/>
<dbReference type="Proteomes" id="UP000000659">
    <property type="component" value="Chromosome"/>
</dbReference>
<dbReference type="GO" id="GO:0097367">
    <property type="term" value="F:carbohydrate derivative binding"/>
    <property type="evidence" value="ECO:0007669"/>
    <property type="project" value="InterPro"/>
</dbReference>
<dbReference type="GO" id="GO:1901135">
    <property type="term" value="P:carbohydrate derivative metabolic process"/>
    <property type="evidence" value="ECO:0007669"/>
    <property type="project" value="InterPro"/>
</dbReference>
<dbReference type="GO" id="GO:0006260">
    <property type="term" value="P:DNA replication"/>
    <property type="evidence" value="ECO:0007669"/>
    <property type="project" value="UniProtKB-UniRule"/>
</dbReference>
<dbReference type="CDD" id="cd05006">
    <property type="entry name" value="SIS_GmhA"/>
    <property type="match status" value="1"/>
</dbReference>
<dbReference type="FunFam" id="3.40.50.10490:FF:000006">
    <property type="entry name" value="DnaA initiator-associating protein DiaA"/>
    <property type="match status" value="1"/>
</dbReference>
<dbReference type="Gene3D" id="3.40.50.10490">
    <property type="entry name" value="Glucose-6-phosphate isomerase like protein, domain 1"/>
    <property type="match status" value="1"/>
</dbReference>
<dbReference type="HAMAP" id="MF_01157">
    <property type="entry name" value="SIS_DiaA"/>
    <property type="match status" value="1"/>
</dbReference>
<dbReference type="InterPro" id="IPR023070">
    <property type="entry name" value="DiaA"/>
</dbReference>
<dbReference type="InterPro" id="IPR035461">
    <property type="entry name" value="GmhA/DiaA"/>
</dbReference>
<dbReference type="InterPro" id="IPR001347">
    <property type="entry name" value="SIS_dom"/>
</dbReference>
<dbReference type="InterPro" id="IPR046348">
    <property type="entry name" value="SIS_dom_sf"/>
</dbReference>
<dbReference type="InterPro" id="IPR050099">
    <property type="entry name" value="SIS_GmhA/DiaA_subfam"/>
</dbReference>
<dbReference type="NCBIfam" id="NF008138">
    <property type="entry name" value="PRK10886.1"/>
    <property type="match status" value="1"/>
</dbReference>
<dbReference type="PANTHER" id="PTHR30390:SF6">
    <property type="entry name" value="DNAA INITIATOR-ASSOCIATING PROTEIN DIAA"/>
    <property type="match status" value="1"/>
</dbReference>
<dbReference type="PANTHER" id="PTHR30390">
    <property type="entry name" value="SEDOHEPTULOSE 7-PHOSPHATE ISOMERASE / DNAA INITIATOR-ASSOCIATING FACTOR FOR REPLICATION INITIATION"/>
    <property type="match status" value="1"/>
</dbReference>
<dbReference type="Pfam" id="PF13580">
    <property type="entry name" value="SIS_2"/>
    <property type="match status" value="1"/>
</dbReference>
<dbReference type="SUPFAM" id="SSF53697">
    <property type="entry name" value="SIS domain"/>
    <property type="match status" value="1"/>
</dbReference>
<dbReference type="PROSITE" id="PS51464">
    <property type="entry name" value="SIS"/>
    <property type="match status" value="1"/>
</dbReference>
<gene>
    <name evidence="1" type="primary">diaA</name>
    <name type="ordered locus">SFV_3179</name>
</gene>
<keyword id="KW-0235">DNA replication</keyword>
<organism>
    <name type="scientific">Shigella flexneri serotype 5b (strain 8401)</name>
    <dbReference type="NCBI Taxonomy" id="373384"/>
    <lineage>
        <taxon>Bacteria</taxon>
        <taxon>Pseudomonadati</taxon>
        <taxon>Pseudomonadota</taxon>
        <taxon>Gammaproteobacteria</taxon>
        <taxon>Enterobacterales</taxon>
        <taxon>Enterobacteriaceae</taxon>
        <taxon>Shigella</taxon>
    </lineage>
</organism>